<organism>
    <name type="scientific">Staphylococcus aureus</name>
    <dbReference type="NCBI Taxonomy" id="1280"/>
    <lineage>
        <taxon>Bacteria</taxon>
        <taxon>Bacillati</taxon>
        <taxon>Bacillota</taxon>
        <taxon>Bacilli</taxon>
        <taxon>Bacillales</taxon>
        <taxon>Staphylococcaceae</taxon>
        <taxon>Staphylococcus</taxon>
    </lineage>
</organism>
<keyword id="KW-0233">DNA recombination</keyword>
<keyword id="KW-0238">DNA-binding</keyword>
<keyword id="KW-0814">Transposable element</keyword>
<keyword id="KW-0815">Transposition</keyword>
<reference key="1">
    <citation type="submission" date="1993-02" db="EMBL/GenBank/DDBJ databases">
        <title>PsiTn554: a Staphylococcus aureus chromosomal element encoding cadmium resistance determinants, and genes resembling the transposases genes of Tn554.</title>
        <authorList>
            <person name="Chikramane S.G."/>
            <person name="Dubin D.T."/>
        </authorList>
    </citation>
    <scope>NUCLEOTIDE SEQUENCE [GENOMIC DNA]</scope>
    <source>
        <transposon>PsiTn554</transposon>
    </source>
</reference>
<protein>
    <recommendedName>
        <fullName>Transposase C from transposon PsiTn554</fullName>
    </recommendedName>
</protein>
<name>TNPF_STAAU</name>
<dbReference type="EMBL" id="L10909">
    <property type="protein sequence ID" value="AAA26608.1"/>
    <property type="molecule type" value="Genomic_DNA"/>
</dbReference>
<dbReference type="SMR" id="P37376"/>
<dbReference type="GO" id="GO:0003677">
    <property type="term" value="F:DNA binding"/>
    <property type="evidence" value="ECO:0007669"/>
    <property type="project" value="UniProtKB-KW"/>
</dbReference>
<dbReference type="GO" id="GO:0006310">
    <property type="term" value="P:DNA recombination"/>
    <property type="evidence" value="ECO:0007669"/>
    <property type="project" value="UniProtKB-KW"/>
</dbReference>
<dbReference type="GO" id="GO:0032196">
    <property type="term" value="P:transposition"/>
    <property type="evidence" value="ECO:0007669"/>
    <property type="project" value="UniProtKB-KW"/>
</dbReference>
<dbReference type="InterPro" id="IPR046229">
    <property type="entry name" value="TnpC-like"/>
</dbReference>
<dbReference type="Pfam" id="PF19776">
    <property type="entry name" value="DUF6262"/>
    <property type="match status" value="1"/>
</dbReference>
<gene>
    <name type="primary">tnpC</name>
</gene>
<feature type="chain" id="PRO_0000072608" description="Transposase C from transposon PsiTn554">
    <location>
        <begin position="1"/>
        <end position="125"/>
    </location>
</feature>
<accession>P37376</accession>
<proteinExistence type="predicted"/>
<sequence length="125" mass="14896">MNKQVRNTTEIVRLAKLKSQKTREKVDKAISKFCIEGFAINFNSIAKERNVSKSWLYKEHDIRQRIESLRERQITSNVVSKPKKSSRSEEILIKTLKRRVMELEKENKKLQNQIQKLYGDLYNKE</sequence>